<feature type="chain" id="PRO_0000366640" description="Ribosomal RNA large subunit methyltransferase H">
    <location>
        <begin position="1"/>
        <end position="156"/>
    </location>
</feature>
<feature type="binding site" evidence="1">
    <location>
        <position position="73"/>
    </location>
    <ligand>
        <name>S-adenosyl-L-methionine</name>
        <dbReference type="ChEBI" id="CHEBI:59789"/>
    </ligand>
</feature>
<feature type="binding site" evidence="1">
    <location>
        <position position="104"/>
    </location>
    <ligand>
        <name>S-adenosyl-L-methionine</name>
        <dbReference type="ChEBI" id="CHEBI:59789"/>
    </ligand>
</feature>
<feature type="binding site" evidence="1">
    <location>
        <begin position="123"/>
        <end position="128"/>
    </location>
    <ligand>
        <name>S-adenosyl-L-methionine</name>
        <dbReference type="ChEBI" id="CHEBI:59789"/>
    </ligand>
</feature>
<sequence length="156" mass="17466">MKLQLIAVGTKMPDWIQTGFMDYLNRFPKDMPLELIEIPAGKRGKNADIKRILEKEGEQMLAAVGKGNRIVTLDIPGARWDTPKLAEQLDRWKLDGRNVSLLIGGPEGLAPACKAAAEQSWSLSPLTMPHPLVRVVVAESLYRAWSITTNHPYHRE</sequence>
<keyword id="KW-0963">Cytoplasm</keyword>
<keyword id="KW-0489">Methyltransferase</keyword>
<keyword id="KW-1185">Reference proteome</keyword>
<keyword id="KW-0698">rRNA processing</keyword>
<keyword id="KW-0949">S-adenosyl-L-methionine</keyword>
<keyword id="KW-0808">Transferase</keyword>
<gene>
    <name evidence="1" type="primary">rlmH</name>
    <name type="ordered locus">PMI0427</name>
</gene>
<organism>
    <name type="scientific">Proteus mirabilis (strain HI4320)</name>
    <dbReference type="NCBI Taxonomy" id="529507"/>
    <lineage>
        <taxon>Bacteria</taxon>
        <taxon>Pseudomonadati</taxon>
        <taxon>Pseudomonadota</taxon>
        <taxon>Gammaproteobacteria</taxon>
        <taxon>Enterobacterales</taxon>
        <taxon>Morganellaceae</taxon>
        <taxon>Proteus</taxon>
    </lineage>
</organism>
<evidence type="ECO:0000255" key="1">
    <source>
        <dbReference type="HAMAP-Rule" id="MF_00658"/>
    </source>
</evidence>
<name>RLMH_PROMH</name>
<dbReference type="EC" id="2.1.1.177" evidence="1"/>
<dbReference type="EMBL" id="AM942759">
    <property type="protein sequence ID" value="CAR41066.1"/>
    <property type="molecule type" value="Genomic_DNA"/>
</dbReference>
<dbReference type="RefSeq" id="WP_004246050.1">
    <property type="nucleotide sequence ID" value="NC_010554.1"/>
</dbReference>
<dbReference type="SMR" id="B4EV08"/>
<dbReference type="EnsemblBacteria" id="CAR41066">
    <property type="protein sequence ID" value="CAR41066"/>
    <property type="gene ID" value="PMI0427"/>
</dbReference>
<dbReference type="GeneID" id="83611601"/>
<dbReference type="KEGG" id="pmr:PMI0427"/>
<dbReference type="eggNOG" id="COG1576">
    <property type="taxonomic scope" value="Bacteria"/>
</dbReference>
<dbReference type="HOGENOM" id="CLU_100552_1_0_6"/>
<dbReference type="Proteomes" id="UP000008319">
    <property type="component" value="Chromosome"/>
</dbReference>
<dbReference type="GO" id="GO:0005737">
    <property type="term" value="C:cytoplasm"/>
    <property type="evidence" value="ECO:0007669"/>
    <property type="project" value="UniProtKB-SubCell"/>
</dbReference>
<dbReference type="GO" id="GO:0070038">
    <property type="term" value="F:rRNA (pseudouridine-N3-)-methyltransferase activity"/>
    <property type="evidence" value="ECO:0007669"/>
    <property type="project" value="UniProtKB-UniRule"/>
</dbReference>
<dbReference type="CDD" id="cd18081">
    <property type="entry name" value="RlmH-like"/>
    <property type="match status" value="1"/>
</dbReference>
<dbReference type="Gene3D" id="3.40.1280.10">
    <property type="match status" value="1"/>
</dbReference>
<dbReference type="HAMAP" id="MF_00658">
    <property type="entry name" value="23SrRNA_methyltr_H"/>
    <property type="match status" value="1"/>
</dbReference>
<dbReference type="InterPro" id="IPR029028">
    <property type="entry name" value="Alpha/beta_knot_MTases"/>
</dbReference>
<dbReference type="InterPro" id="IPR003742">
    <property type="entry name" value="RlmH-like"/>
</dbReference>
<dbReference type="InterPro" id="IPR029026">
    <property type="entry name" value="tRNA_m1G_MTases_N"/>
</dbReference>
<dbReference type="NCBIfam" id="NF000984">
    <property type="entry name" value="PRK00103.1-1"/>
    <property type="match status" value="1"/>
</dbReference>
<dbReference type="NCBIfam" id="NF000986">
    <property type="entry name" value="PRK00103.1-4"/>
    <property type="match status" value="1"/>
</dbReference>
<dbReference type="NCBIfam" id="TIGR00246">
    <property type="entry name" value="tRNA_RlmH_YbeA"/>
    <property type="match status" value="1"/>
</dbReference>
<dbReference type="PANTHER" id="PTHR33603">
    <property type="entry name" value="METHYLTRANSFERASE"/>
    <property type="match status" value="1"/>
</dbReference>
<dbReference type="PANTHER" id="PTHR33603:SF1">
    <property type="entry name" value="RIBOSOMAL RNA LARGE SUBUNIT METHYLTRANSFERASE H"/>
    <property type="match status" value="1"/>
</dbReference>
<dbReference type="Pfam" id="PF02590">
    <property type="entry name" value="SPOUT_MTase"/>
    <property type="match status" value="1"/>
</dbReference>
<dbReference type="PIRSF" id="PIRSF004505">
    <property type="entry name" value="MT_bac"/>
    <property type="match status" value="1"/>
</dbReference>
<dbReference type="SUPFAM" id="SSF75217">
    <property type="entry name" value="alpha/beta knot"/>
    <property type="match status" value="1"/>
</dbReference>
<proteinExistence type="inferred from homology"/>
<protein>
    <recommendedName>
        <fullName evidence="1">Ribosomal RNA large subunit methyltransferase H</fullName>
        <ecNumber evidence="1">2.1.1.177</ecNumber>
    </recommendedName>
    <alternativeName>
        <fullName evidence="1">23S rRNA (pseudouridine1915-N3)-methyltransferase</fullName>
    </alternativeName>
    <alternativeName>
        <fullName evidence="1">23S rRNA m3Psi1915 methyltransferase</fullName>
    </alternativeName>
    <alternativeName>
        <fullName evidence="1">rRNA (pseudouridine-N3-)-methyltransferase RlmH</fullName>
    </alternativeName>
</protein>
<reference key="1">
    <citation type="journal article" date="2008" name="J. Bacteriol.">
        <title>Complete genome sequence of uropathogenic Proteus mirabilis, a master of both adherence and motility.</title>
        <authorList>
            <person name="Pearson M.M."/>
            <person name="Sebaihia M."/>
            <person name="Churcher C."/>
            <person name="Quail M.A."/>
            <person name="Seshasayee A.S."/>
            <person name="Luscombe N.M."/>
            <person name="Abdellah Z."/>
            <person name="Arrosmith C."/>
            <person name="Atkin B."/>
            <person name="Chillingworth T."/>
            <person name="Hauser H."/>
            <person name="Jagels K."/>
            <person name="Moule S."/>
            <person name="Mungall K."/>
            <person name="Norbertczak H."/>
            <person name="Rabbinowitsch E."/>
            <person name="Walker D."/>
            <person name="Whithead S."/>
            <person name="Thomson N.R."/>
            <person name="Rather P.N."/>
            <person name="Parkhill J."/>
            <person name="Mobley H.L.T."/>
        </authorList>
    </citation>
    <scope>NUCLEOTIDE SEQUENCE [LARGE SCALE GENOMIC DNA]</scope>
    <source>
        <strain>HI4320</strain>
    </source>
</reference>
<comment type="function">
    <text evidence="1">Specifically methylates the pseudouridine at position 1915 (m3Psi1915) in 23S rRNA.</text>
</comment>
<comment type="catalytic activity">
    <reaction evidence="1">
        <text>pseudouridine(1915) in 23S rRNA + S-adenosyl-L-methionine = N(3)-methylpseudouridine(1915) in 23S rRNA + S-adenosyl-L-homocysteine + H(+)</text>
        <dbReference type="Rhea" id="RHEA:42752"/>
        <dbReference type="Rhea" id="RHEA-COMP:10221"/>
        <dbReference type="Rhea" id="RHEA-COMP:10222"/>
        <dbReference type="ChEBI" id="CHEBI:15378"/>
        <dbReference type="ChEBI" id="CHEBI:57856"/>
        <dbReference type="ChEBI" id="CHEBI:59789"/>
        <dbReference type="ChEBI" id="CHEBI:65314"/>
        <dbReference type="ChEBI" id="CHEBI:74486"/>
        <dbReference type="EC" id="2.1.1.177"/>
    </reaction>
</comment>
<comment type="subunit">
    <text evidence="1">Homodimer.</text>
</comment>
<comment type="subcellular location">
    <subcellularLocation>
        <location evidence="1">Cytoplasm</location>
    </subcellularLocation>
</comment>
<comment type="similarity">
    <text evidence="1">Belongs to the RNA methyltransferase RlmH family.</text>
</comment>
<accession>B4EV08</accession>